<feature type="chain" id="PRO_0000204556" description="Photosystem II assembly factor Ycf39">
    <location>
        <begin position="1"/>
        <end position="314"/>
    </location>
</feature>
<evidence type="ECO:0000250" key="1">
    <source>
        <dbReference type="UniProtKB" id="P74429"/>
    </source>
</evidence>
<evidence type="ECO:0000305" key="2"/>
<name>YCF39_GUITH</name>
<gene>
    <name type="primary">ycf39</name>
</gene>
<accession>O78472</accession>
<sequence>MSLLVIGATGTLGRQIVRRALDEGYEVSCLVRNLRKAYFLKEWGAELLYGDLSLPETLPTNLTKITAIIDASTARPSDPYKAEKIDLEGKIALVEAAKVAGIKRFVFFSVLNAQNYRHLPLVNLKCRMEEYLQTSELEYTTFQLSGFFQGLISQYAIPILEKQTIWITGEYTKINYIDTNDIAKFAVRSLSLNGTIKRTIPLVGLKSWNSEEIIQLCERLSGQKANITKIPLQLLVFFKYLTGFFEWTTNISERLAFAEVLNARQDITSEMASTYSQFGFEPNDITSLESYMQDYFGRILRRLKELSDERERTL</sequence>
<keyword id="KW-0150">Chloroplast</keyword>
<keyword id="KW-0560">Oxidoreductase</keyword>
<keyword id="KW-0602">Photosynthesis</keyword>
<keyword id="KW-0604">Photosystem II</keyword>
<keyword id="KW-0934">Plastid</keyword>
<geneLocation type="chloroplast"/>
<proteinExistence type="inferred from homology"/>
<comment type="function">
    <text evidence="1">Involved in assembly of photosystem II.</text>
</comment>
<comment type="subcellular location">
    <subcellularLocation>
        <location>Plastid</location>
        <location>Chloroplast</location>
    </subcellularLocation>
</comment>
<comment type="similarity">
    <text evidence="2">Belongs to the NmrA-type oxidoreductase family. Ycf39 subfamily.</text>
</comment>
<organism>
    <name type="scientific">Guillardia theta</name>
    <name type="common">Cryptophyte</name>
    <name type="synonym">Cryptomonas phi</name>
    <dbReference type="NCBI Taxonomy" id="55529"/>
    <lineage>
        <taxon>Eukaryota</taxon>
        <taxon>Cryptophyceae</taxon>
        <taxon>Pyrenomonadales</taxon>
        <taxon>Geminigeraceae</taxon>
        <taxon>Guillardia</taxon>
    </lineage>
</organism>
<protein>
    <recommendedName>
        <fullName evidence="2">Photosystem II assembly factor Ycf39</fullName>
        <ecNumber>1.-.-.-</ecNumber>
    </recommendedName>
</protein>
<reference key="1">
    <citation type="journal article" date="1999" name="J. Mol. Evol.">
        <title>The plastid genome of the cryptophyte alga, Guillardia theta: complete sequence and conserved synteny groups confirm its common ancestry with red algae.</title>
        <authorList>
            <person name="Douglas S.E."/>
            <person name="Penny S.L."/>
        </authorList>
    </citation>
    <scope>NUCLEOTIDE SEQUENCE [LARGE SCALE GENOMIC DNA]</scope>
</reference>
<dbReference type="EC" id="1.-.-.-"/>
<dbReference type="EMBL" id="AF041468">
    <property type="protein sequence ID" value="AAC35663.1"/>
    <property type="molecule type" value="Genomic_DNA"/>
</dbReference>
<dbReference type="RefSeq" id="NP_050729.1">
    <property type="nucleotide sequence ID" value="NC_000926.1"/>
</dbReference>
<dbReference type="SMR" id="O78472"/>
<dbReference type="GeneID" id="857033"/>
<dbReference type="HOGENOM" id="CLU_007383_10_3_1"/>
<dbReference type="OMA" id="AYMNTQD"/>
<dbReference type="GO" id="GO:0009507">
    <property type="term" value="C:chloroplast"/>
    <property type="evidence" value="ECO:0007669"/>
    <property type="project" value="UniProtKB-SubCell"/>
</dbReference>
<dbReference type="GO" id="GO:0009523">
    <property type="term" value="C:photosystem II"/>
    <property type="evidence" value="ECO:0007669"/>
    <property type="project" value="UniProtKB-KW"/>
</dbReference>
<dbReference type="GO" id="GO:0016491">
    <property type="term" value="F:oxidoreductase activity"/>
    <property type="evidence" value="ECO:0007669"/>
    <property type="project" value="UniProtKB-KW"/>
</dbReference>
<dbReference type="GO" id="GO:0015979">
    <property type="term" value="P:photosynthesis"/>
    <property type="evidence" value="ECO:0007669"/>
    <property type="project" value="UniProtKB-KW"/>
</dbReference>
<dbReference type="CDD" id="cd05243">
    <property type="entry name" value="SDR_a5"/>
    <property type="match status" value="1"/>
</dbReference>
<dbReference type="Gene3D" id="3.40.50.720">
    <property type="entry name" value="NAD(P)-binding Rossmann-like Domain"/>
    <property type="match status" value="1"/>
</dbReference>
<dbReference type="InterPro" id="IPR044256">
    <property type="entry name" value="HCF244-like"/>
</dbReference>
<dbReference type="InterPro" id="IPR036291">
    <property type="entry name" value="NAD(P)-bd_dom_sf"/>
</dbReference>
<dbReference type="InterPro" id="IPR008030">
    <property type="entry name" value="NmrA-like"/>
</dbReference>
<dbReference type="PANTHER" id="PTHR47128">
    <property type="match status" value="1"/>
</dbReference>
<dbReference type="PANTHER" id="PTHR47128:SF2">
    <property type="entry name" value="PROTEIN HIGH CHLOROPHYLL FLUORESCENCE PHENOTYPE 244, CHLOROPLASTIC"/>
    <property type="match status" value="1"/>
</dbReference>
<dbReference type="Pfam" id="PF05368">
    <property type="entry name" value="NmrA"/>
    <property type="match status" value="1"/>
</dbReference>
<dbReference type="SUPFAM" id="SSF51735">
    <property type="entry name" value="NAD(P)-binding Rossmann-fold domains"/>
    <property type="match status" value="1"/>
</dbReference>